<comment type="function">
    <text evidence="1">Allows the formation of correctly charged Asn-tRNA(Asn) or Gln-tRNA(Gln) through the transamidation of misacylated Asp-tRNA(Asn) or Glu-tRNA(Gln) in organisms which lack either or both of asparaginyl-tRNA or glutaminyl-tRNA synthetases. The reaction takes place in the presence of glutamine and ATP through an activated phospho-Asp-tRNA(Asn) or phospho-Glu-tRNA(Gln).</text>
</comment>
<comment type="catalytic activity">
    <reaction evidence="1">
        <text>L-glutamyl-tRNA(Gln) + L-glutamine + ATP + H2O = L-glutaminyl-tRNA(Gln) + L-glutamate + ADP + phosphate + H(+)</text>
        <dbReference type="Rhea" id="RHEA:17521"/>
        <dbReference type="Rhea" id="RHEA-COMP:9681"/>
        <dbReference type="Rhea" id="RHEA-COMP:9684"/>
        <dbReference type="ChEBI" id="CHEBI:15377"/>
        <dbReference type="ChEBI" id="CHEBI:15378"/>
        <dbReference type="ChEBI" id="CHEBI:29985"/>
        <dbReference type="ChEBI" id="CHEBI:30616"/>
        <dbReference type="ChEBI" id="CHEBI:43474"/>
        <dbReference type="ChEBI" id="CHEBI:58359"/>
        <dbReference type="ChEBI" id="CHEBI:78520"/>
        <dbReference type="ChEBI" id="CHEBI:78521"/>
        <dbReference type="ChEBI" id="CHEBI:456216"/>
    </reaction>
</comment>
<comment type="catalytic activity">
    <reaction evidence="1">
        <text>L-aspartyl-tRNA(Asn) + L-glutamine + ATP + H2O = L-asparaginyl-tRNA(Asn) + L-glutamate + ADP + phosphate + 2 H(+)</text>
        <dbReference type="Rhea" id="RHEA:14513"/>
        <dbReference type="Rhea" id="RHEA-COMP:9674"/>
        <dbReference type="Rhea" id="RHEA-COMP:9677"/>
        <dbReference type="ChEBI" id="CHEBI:15377"/>
        <dbReference type="ChEBI" id="CHEBI:15378"/>
        <dbReference type="ChEBI" id="CHEBI:29985"/>
        <dbReference type="ChEBI" id="CHEBI:30616"/>
        <dbReference type="ChEBI" id="CHEBI:43474"/>
        <dbReference type="ChEBI" id="CHEBI:58359"/>
        <dbReference type="ChEBI" id="CHEBI:78515"/>
        <dbReference type="ChEBI" id="CHEBI:78516"/>
        <dbReference type="ChEBI" id="CHEBI:456216"/>
    </reaction>
</comment>
<comment type="subunit">
    <text evidence="1">Heterotrimer of A, B and C subunits.</text>
</comment>
<comment type="similarity">
    <text evidence="1">Belongs to the GatC family.</text>
</comment>
<reference key="1">
    <citation type="journal article" date="2001" name="Proc. Natl. Acad. Sci. U.S.A.">
        <title>Complete genome sequence of an M1 strain of Streptococcus pyogenes.</title>
        <authorList>
            <person name="Ferretti J.J."/>
            <person name="McShan W.M."/>
            <person name="Ajdic D.J."/>
            <person name="Savic D.J."/>
            <person name="Savic G."/>
            <person name="Lyon K."/>
            <person name="Primeaux C."/>
            <person name="Sezate S."/>
            <person name="Suvorov A.N."/>
            <person name="Kenton S."/>
            <person name="Lai H.S."/>
            <person name="Lin S.P."/>
            <person name="Qian Y."/>
            <person name="Jia H.G."/>
            <person name="Najar F.Z."/>
            <person name="Ren Q."/>
            <person name="Zhu H."/>
            <person name="Song L."/>
            <person name="White J."/>
            <person name="Yuan X."/>
            <person name="Clifton S.W."/>
            <person name="Roe B.A."/>
            <person name="McLaughlin R.E."/>
        </authorList>
    </citation>
    <scope>NUCLEOTIDE SEQUENCE [LARGE SCALE GENOMIC DNA]</scope>
    <source>
        <strain>ATCC 700294 / SF370 / Serotype M1</strain>
    </source>
</reference>
<reference key="2">
    <citation type="journal article" date="2005" name="J. Infect. Dis.">
        <title>Evolutionary origin and emergence of a highly successful clone of serotype M1 group A Streptococcus involved multiple horizontal gene transfer events.</title>
        <authorList>
            <person name="Sumby P."/>
            <person name="Porcella S.F."/>
            <person name="Madrigal A.G."/>
            <person name="Barbian K.D."/>
            <person name="Virtaneva K."/>
            <person name="Ricklefs S.M."/>
            <person name="Sturdevant D.E."/>
            <person name="Graham M.R."/>
            <person name="Vuopio-Varkila J."/>
            <person name="Hoe N.P."/>
            <person name="Musser J.M."/>
        </authorList>
    </citation>
    <scope>NUCLEOTIDE SEQUENCE [LARGE SCALE GENOMIC DNA]</scope>
    <source>
        <strain>ATCC BAA-947 / MGAS5005 / Serotype M1</strain>
    </source>
</reference>
<protein>
    <recommendedName>
        <fullName>Glutamyl-tRNA(Gln) amidotransferase subunit C</fullName>
        <shortName>Glu-ADT subunit C</shortName>
        <ecNumber evidence="1">6.3.5.-</ecNumber>
    </recommendedName>
</protein>
<sequence>MKISEEEVRHVAKLSKLSFSESETTTFATTLSKIVDMVELLNEVDTEGVAITTTMADKKNVMRQDVAEEGTDRALLFKNVPEKENHFIKVPAILDDGGDA</sequence>
<proteinExistence type="inferred from homology"/>
<dbReference type="EC" id="6.3.5.-" evidence="1"/>
<dbReference type="EMBL" id="AE004092">
    <property type="protein sequence ID" value="AAK34511.1"/>
    <property type="molecule type" value="Genomic_DNA"/>
</dbReference>
<dbReference type="EMBL" id="CP000017">
    <property type="protein sequence ID" value="AAZ52126.1"/>
    <property type="molecule type" value="Genomic_DNA"/>
</dbReference>
<dbReference type="RefSeq" id="NP_269790.1">
    <property type="nucleotide sequence ID" value="NC_002737.2"/>
</dbReference>
<dbReference type="SMR" id="P68890"/>
<dbReference type="BindingDB" id="P68890"/>
<dbReference type="ChEMBL" id="CHEMBL4754"/>
<dbReference type="PaxDb" id="1314-HKU360_01562"/>
<dbReference type="KEGG" id="spy:SPy_1772"/>
<dbReference type="KEGG" id="spz:M5005_Spy1508"/>
<dbReference type="PATRIC" id="fig|160490.10.peg.1541"/>
<dbReference type="HOGENOM" id="CLU_105899_1_2_9"/>
<dbReference type="OMA" id="VTPMAMK"/>
<dbReference type="Proteomes" id="UP000000750">
    <property type="component" value="Chromosome"/>
</dbReference>
<dbReference type="GO" id="GO:0050566">
    <property type="term" value="F:asparaginyl-tRNA synthase (glutamine-hydrolyzing) activity"/>
    <property type="evidence" value="ECO:0007669"/>
    <property type="project" value="RHEA"/>
</dbReference>
<dbReference type="GO" id="GO:0005524">
    <property type="term" value="F:ATP binding"/>
    <property type="evidence" value="ECO:0007669"/>
    <property type="project" value="UniProtKB-KW"/>
</dbReference>
<dbReference type="GO" id="GO:0050567">
    <property type="term" value="F:glutaminyl-tRNA synthase (glutamine-hydrolyzing) activity"/>
    <property type="evidence" value="ECO:0007669"/>
    <property type="project" value="UniProtKB-UniRule"/>
</dbReference>
<dbReference type="GO" id="GO:0070681">
    <property type="term" value="P:glutaminyl-tRNAGln biosynthesis via transamidation"/>
    <property type="evidence" value="ECO:0007669"/>
    <property type="project" value="TreeGrafter"/>
</dbReference>
<dbReference type="GO" id="GO:0006450">
    <property type="term" value="P:regulation of translational fidelity"/>
    <property type="evidence" value="ECO:0007669"/>
    <property type="project" value="InterPro"/>
</dbReference>
<dbReference type="GO" id="GO:0006412">
    <property type="term" value="P:translation"/>
    <property type="evidence" value="ECO:0007669"/>
    <property type="project" value="UniProtKB-UniRule"/>
</dbReference>
<dbReference type="Gene3D" id="1.10.20.60">
    <property type="entry name" value="Glu-tRNAGln amidotransferase C subunit, N-terminal domain"/>
    <property type="match status" value="1"/>
</dbReference>
<dbReference type="HAMAP" id="MF_00122">
    <property type="entry name" value="GatC"/>
    <property type="match status" value="1"/>
</dbReference>
<dbReference type="InterPro" id="IPR036113">
    <property type="entry name" value="Asp/Glu-ADT_sf_sub_c"/>
</dbReference>
<dbReference type="InterPro" id="IPR003837">
    <property type="entry name" value="GatC"/>
</dbReference>
<dbReference type="NCBIfam" id="TIGR00135">
    <property type="entry name" value="gatC"/>
    <property type="match status" value="1"/>
</dbReference>
<dbReference type="PANTHER" id="PTHR15004">
    <property type="entry name" value="GLUTAMYL-TRNA(GLN) AMIDOTRANSFERASE SUBUNIT C, MITOCHONDRIAL"/>
    <property type="match status" value="1"/>
</dbReference>
<dbReference type="PANTHER" id="PTHR15004:SF0">
    <property type="entry name" value="GLUTAMYL-TRNA(GLN) AMIDOTRANSFERASE SUBUNIT C, MITOCHONDRIAL"/>
    <property type="match status" value="1"/>
</dbReference>
<dbReference type="Pfam" id="PF02686">
    <property type="entry name" value="GatC"/>
    <property type="match status" value="1"/>
</dbReference>
<dbReference type="SUPFAM" id="SSF141000">
    <property type="entry name" value="Glu-tRNAGln amidotransferase C subunit"/>
    <property type="match status" value="1"/>
</dbReference>
<keyword id="KW-0067">ATP-binding</keyword>
<keyword id="KW-0436">Ligase</keyword>
<keyword id="KW-0547">Nucleotide-binding</keyword>
<keyword id="KW-0648">Protein biosynthesis</keyword>
<keyword id="KW-1185">Reference proteome</keyword>
<gene>
    <name evidence="1" type="primary">gatC</name>
    <name type="ordered locus">SPy_1772</name>
    <name type="ordered locus">M5005_Spy1508</name>
</gene>
<organism>
    <name type="scientific">Streptococcus pyogenes serotype M1</name>
    <dbReference type="NCBI Taxonomy" id="301447"/>
    <lineage>
        <taxon>Bacteria</taxon>
        <taxon>Bacillati</taxon>
        <taxon>Bacillota</taxon>
        <taxon>Bacilli</taxon>
        <taxon>Lactobacillales</taxon>
        <taxon>Streptococcaceae</taxon>
        <taxon>Streptococcus</taxon>
    </lineage>
</organism>
<feature type="chain" id="PRO_0000105345" description="Glutamyl-tRNA(Gln) amidotransferase subunit C">
    <location>
        <begin position="1"/>
        <end position="100"/>
    </location>
</feature>
<name>GATC_STRP1</name>
<evidence type="ECO:0000255" key="1">
    <source>
        <dbReference type="HAMAP-Rule" id="MF_00122"/>
    </source>
</evidence>
<accession>P68890</accession>
<accession>P82582</accession>
<accession>Q48WZ9</accession>
<accession>Q99YB9</accession>